<protein>
    <recommendedName>
        <fullName>Lymphocyte antigen 6I</fullName>
        <shortName>Ly-6I</shortName>
    </recommendedName>
    <alternativeName>
        <fullName>Lymphocyte antigen 6M</fullName>
        <shortName>Ly-6M</shortName>
    </alternativeName>
</protein>
<keyword id="KW-1003">Cell membrane</keyword>
<keyword id="KW-1015">Disulfide bond</keyword>
<keyword id="KW-0325">Glycoprotein</keyword>
<keyword id="KW-0336">GPI-anchor</keyword>
<keyword id="KW-0449">Lipoprotein</keyword>
<keyword id="KW-0472">Membrane</keyword>
<keyword id="KW-1185">Reference proteome</keyword>
<keyword id="KW-0732">Signal</keyword>
<reference key="1">
    <citation type="journal article" date="2000" name="J. Immunol.">
        <title>Ly-6I, a new member of the murine Ly-6 superfamily with a distinct pattern of expression.</title>
        <authorList>
            <person name="Pflugh D.L."/>
            <person name="Maher S.E."/>
            <person name="Bothwell A.L.M."/>
        </authorList>
    </citation>
    <scope>NUCLEOTIDE SEQUENCE [GENOMIC DNA / MRNA]</scope>
    <scope>VARIANTS GLU-6 AND ARG-68</scope>
    <source>
        <strain>BALB/cJ</strain>
        <strain>C57BL/6J</strain>
        <strain>NOD</strain>
        <tissue>Bone marrow</tissue>
        <tissue>Keratinocyte</tissue>
        <tissue>Plasmacytoma</tissue>
    </source>
</reference>
<reference key="2">
    <citation type="journal article" date="2000" name="Blood">
        <title>Characterization of Ly-6M, a novel member of the Ly-6 family of hematopoietic proteins.</title>
        <authorList>
            <person name="Patterson J.M.M."/>
            <person name="Johnson M.H."/>
            <person name="Zimonjic D.B."/>
            <person name="Graubert T.A."/>
        </authorList>
    </citation>
    <scope>NUCLEOTIDE SEQUENCE [GENOMIC DNA]</scope>
    <source>
        <strain>129/Ola</strain>
        <tissue>Splenocyte</tissue>
    </source>
</reference>
<reference key="3">
    <citation type="journal article" date="2004" name="Genome Res.">
        <title>The status, quality, and expansion of the NIH full-length cDNA project: the Mammalian Gene Collection (MGC).</title>
        <authorList>
            <consortium name="The MGC Project Team"/>
        </authorList>
    </citation>
    <scope>NUCLEOTIDE SEQUENCE [LARGE SCALE MRNA]</scope>
    <source>
        <tissue>Brain</tissue>
    </source>
</reference>
<feature type="signal peptide" evidence="2">
    <location>
        <begin position="1"/>
        <end position="21"/>
    </location>
</feature>
<feature type="chain" id="PRO_0000036152" description="Lymphocyte antigen 6I">
    <location>
        <begin position="22"/>
        <end position="112"/>
    </location>
</feature>
<feature type="propeptide" id="PRO_0000036153" description="Removed in mature form" evidence="2">
    <location>
        <begin position="113"/>
        <end position="134"/>
    </location>
</feature>
<feature type="domain" description="UPAR/Ly6">
    <location>
        <begin position="27"/>
        <end position="105"/>
    </location>
</feature>
<feature type="lipid moiety-binding region" description="GPI-anchor amidated glycine" evidence="2">
    <location>
        <position position="112"/>
    </location>
</feature>
<feature type="glycosylation site" description="N-linked (GlcNAc...) asparagine" evidence="2">
    <location>
        <position position="95"/>
    </location>
</feature>
<feature type="disulfide bond" evidence="1">
    <location>
        <begin position="29"/>
        <end position="53"/>
    </location>
</feature>
<feature type="disulfide bond" evidence="1">
    <location>
        <begin position="32"/>
        <end position="41"/>
    </location>
</feature>
<feature type="disulfide bond" evidence="1">
    <location>
        <begin position="46"/>
        <end position="74"/>
    </location>
</feature>
<feature type="disulfide bond" evidence="1">
    <location>
        <begin position="78"/>
        <end position="98"/>
    </location>
</feature>
<feature type="disulfide bond" evidence="1">
    <location>
        <begin position="99"/>
        <end position="104"/>
    </location>
</feature>
<feature type="sequence variant" description="In Ly-6I.1." evidence="3">
    <original>A</original>
    <variation>E</variation>
    <location>
        <position position="6"/>
    </location>
</feature>
<feature type="sequence variant" description="In Ly-6I.1." evidence="3">
    <original>K</original>
    <variation>R</variation>
    <location>
        <position position="68"/>
    </location>
</feature>
<sequence length="134" mass="14714">MDTSHAIKSCVLILLVTLLCAERAQGLECYQCYGVPFETSCPSFTCPYPDGFCVAQEEEFIANSQRKKVKSRSCHPFCPDEIEKKFILDPNTKMNISCCQEDLCNAAVPTGGSSWTTAGVLLFSLGSVLLQTLM</sequence>
<gene>
    <name type="primary">Ly6i</name>
    <name type="synonym">Ly6m</name>
</gene>
<proteinExistence type="evidence at transcript level"/>
<name>LY6I_MOUSE</name>
<dbReference type="EMBL" id="AF231406">
    <property type="protein sequence ID" value="AAF79938.1"/>
    <property type="molecule type" value="Genomic_DNA"/>
</dbReference>
<dbReference type="EMBL" id="AF232024">
    <property type="protein sequence ID" value="AAF79939.1"/>
    <property type="molecule type" value="mRNA"/>
</dbReference>
<dbReference type="EMBL" id="AF118557">
    <property type="protein sequence ID" value="AAD34344.1"/>
    <property type="molecule type" value="Genomic_DNA"/>
</dbReference>
<dbReference type="EMBL" id="BC125350">
    <property type="protein sequence ID" value="AAI25351.1"/>
    <property type="molecule type" value="mRNA"/>
</dbReference>
<dbReference type="EMBL" id="BC132052">
    <property type="protein sequence ID" value="AAI32053.1"/>
    <property type="molecule type" value="mRNA"/>
</dbReference>
<dbReference type="CCDS" id="CCDS27539.1"/>
<dbReference type="RefSeq" id="NP_001344934.1">
    <property type="nucleotide sequence ID" value="NM_001358005.1"/>
</dbReference>
<dbReference type="RefSeq" id="NP_065244.2">
    <property type="nucleotide sequence ID" value="NM_020498.3"/>
</dbReference>
<dbReference type="RefSeq" id="XP_006521275.1">
    <property type="nucleotide sequence ID" value="XM_006521212.3"/>
</dbReference>
<dbReference type="RefSeq" id="XP_006521276.1">
    <property type="nucleotide sequence ID" value="XM_006521213.3"/>
</dbReference>
<dbReference type="FunCoup" id="Q9WU67">
    <property type="interactions" value="227"/>
</dbReference>
<dbReference type="STRING" id="10090.ENSMUSP00000023250"/>
<dbReference type="GlyCosmos" id="Q9WU67">
    <property type="glycosylation" value="1 site, No reported glycans"/>
</dbReference>
<dbReference type="GlyGen" id="Q9WU67">
    <property type="glycosylation" value="1 site"/>
</dbReference>
<dbReference type="PaxDb" id="10090-ENSMUSP00000023250"/>
<dbReference type="DNASU" id="57248"/>
<dbReference type="Ensembl" id="ENSMUST00000023250.11">
    <property type="protein sequence ID" value="ENSMUSP00000023250.5"/>
    <property type="gene ID" value="ENSMUSG00000022586.12"/>
</dbReference>
<dbReference type="Ensembl" id="ENSMUST00000166694.2">
    <property type="protein sequence ID" value="ENSMUSP00000129867.2"/>
    <property type="gene ID" value="ENSMUSG00000022586.12"/>
</dbReference>
<dbReference type="GeneID" id="57248"/>
<dbReference type="KEGG" id="mmu:57248"/>
<dbReference type="UCSC" id="uc007wgj.2">
    <property type="organism name" value="mouse"/>
</dbReference>
<dbReference type="AGR" id="MGI:1888480"/>
<dbReference type="CTD" id="57248"/>
<dbReference type="MGI" id="MGI:1888480">
    <property type="gene designation" value="Ly6i"/>
</dbReference>
<dbReference type="VEuPathDB" id="HostDB:ENSMUSG00000022586"/>
<dbReference type="eggNOG" id="ENOG502TD4F">
    <property type="taxonomic scope" value="Eukaryota"/>
</dbReference>
<dbReference type="GeneTree" id="ENSGT00940000154560"/>
<dbReference type="HOGENOM" id="CLU_106772_0_0_1"/>
<dbReference type="InParanoid" id="Q9WU67"/>
<dbReference type="OMA" id="DHICLPV"/>
<dbReference type="OrthoDB" id="9624109at2759"/>
<dbReference type="PhylomeDB" id="Q9WU67"/>
<dbReference type="TreeFam" id="TF337757"/>
<dbReference type="BioGRID-ORCS" id="57248">
    <property type="hits" value="1 hit in 74 CRISPR screens"/>
</dbReference>
<dbReference type="PRO" id="PR:Q9WU67"/>
<dbReference type="Proteomes" id="UP000000589">
    <property type="component" value="Chromosome 15"/>
</dbReference>
<dbReference type="RNAct" id="Q9WU67">
    <property type="molecule type" value="protein"/>
</dbReference>
<dbReference type="Bgee" id="ENSMUSG00000022586">
    <property type="expression patterns" value="Expressed in granulocyte and 30 other cell types or tissues"/>
</dbReference>
<dbReference type="GO" id="GO:0005886">
    <property type="term" value="C:plasma membrane"/>
    <property type="evidence" value="ECO:0000304"/>
    <property type="project" value="MGI"/>
</dbReference>
<dbReference type="GO" id="GO:0098552">
    <property type="term" value="C:side of membrane"/>
    <property type="evidence" value="ECO:0007669"/>
    <property type="project" value="UniProtKB-KW"/>
</dbReference>
<dbReference type="CDD" id="cd23541">
    <property type="entry name" value="TFP_LU_ECD_Ly6A_like"/>
    <property type="match status" value="1"/>
</dbReference>
<dbReference type="FunFam" id="2.10.60.10:FF:000003">
    <property type="entry name" value="lymphocyte antigen 6E isoform X1"/>
    <property type="match status" value="1"/>
</dbReference>
<dbReference type="Gene3D" id="2.10.60.10">
    <property type="entry name" value="CD59"/>
    <property type="match status" value="1"/>
</dbReference>
<dbReference type="InterPro" id="IPR018363">
    <property type="entry name" value="CD59_antigen_CS"/>
</dbReference>
<dbReference type="InterPro" id="IPR016054">
    <property type="entry name" value="LY6_UPA_recep-like"/>
</dbReference>
<dbReference type="InterPro" id="IPR051445">
    <property type="entry name" value="LY6H/LY6L_nAChR_modulators"/>
</dbReference>
<dbReference type="InterPro" id="IPR045860">
    <property type="entry name" value="Snake_toxin-like_sf"/>
</dbReference>
<dbReference type="PANTHER" id="PTHR32217">
    <property type="entry name" value="LYMPHOCYTE ANTIGEN 6H"/>
    <property type="match status" value="1"/>
</dbReference>
<dbReference type="PANTHER" id="PTHR32217:SF3">
    <property type="entry name" value="LYMPHOCYTE ANTIGEN 6S"/>
    <property type="match status" value="1"/>
</dbReference>
<dbReference type="Pfam" id="PF00021">
    <property type="entry name" value="UPAR_LY6"/>
    <property type="match status" value="1"/>
</dbReference>
<dbReference type="SMART" id="SM00134">
    <property type="entry name" value="LU"/>
    <property type="match status" value="1"/>
</dbReference>
<dbReference type="SUPFAM" id="SSF57302">
    <property type="entry name" value="Snake toxin-like"/>
    <property type="match status" value="1"/>
</dbReference>
<dbReference type="PROSITE" id="PS00983">
    <property type="entry name" value="LY6_UPAR"/>
    <property type="match status" value="1"/>
</dbReference>
<comment type="subcellular location">
    <subcellularLocation>
        <location evidence="1">Cell membrane</location>
        <topology evidence="1">Lipid-anchor</topology>
        <topology evidence="1">GPI-anchor</topology>
    </subcellularLocation>
</comment>
<comment type="tissue specificity">
    <text>Expressed in hematopoietic tissue (spleen, thymus, bone marrow). Also found in peritoneal macrophages, peripheral blood leukocytes, liver, heart, brain, kidney and lung.</text>
</comment>
<comment type="polymorphism">
    <text evidence="3">Ly-6I.2 and Ly-6I.1 are expressed in bone marrow of strain C57BL/6 and strain NOD, respectively.</text>
</comment>
<evidence type="ECO:0000250" key="1"/>
<evidence type="ECO:0000255" key="2"/>
<evidence type="ECO:0000269" key="3">
    <source>
    </source>
</evidence>
<accession>Q9WU67</accession>
<accession>Q05AA4</accession>
<organism>
    <name type="scientific">Mus musculus</name>
    <name type="common">Mouse</name>
    <dbReference type="NCBI Taxonomy" id="10090"/>
    <lineage>
        <taxon>Eukaryota</taxon>
        <taxon>Metazoa</taxon>
        <taxon>Chordata</taxon>
        <taxon>Craniata</taxon>
        <taxon>Vertebrata</taxon>
        <taxon>Euteleostomi</taxon>
        <taxon>Mammalia</taxon>
        <taxon>Eutheria</taxon>
        <taxon>Euarchontoglires</taxon>
        <taxon>Glires</taxon>
        <taxon>Rodentia</taxon>
        <taxon>Myomorpha</taxon>
        <taxon>Muroidea</taxon>
        <taxon>Muridae</taxon>
        <taxon>Murinae</taxon>
        <taxon>Mus</taxon>
        <taxon>Mus</taxon>
    </lineage>
</organism>